<dbReference type="EMBL" id="DQ885657">
    <property type="protein sequence ID" value="ABH12166.1"/>
    <property type="molecule type" value="mRNA"/>
</dbReference>
<dbReference type="RefSeq" id="NP_001123606.1">
    <property type="nucleotide sequence ID" value="NM_001130134.1"/>
</dbReference>
<dbReference type="SMR" id="Q0MQH7"/>
<dbReference type="FunCoup" id="Q0MQH7">
    <property type="interactions" value="1061"/>
</dbReference>
<dbReference type="STRING" id="9598.ENSPTRP00000087875"/>
<dbReference type="PaxDb" id="9598-ENSPTRP00000028668"/>
<dbReference type="Ensembl" id="ENSPTRT00000031037.6">
    <property type="protein sequence ID" value="ENSPTRP00000028668.6"/>
    <property type="gene ID" value="ENSPTRG00000016706.7"/>
</dbReference>
<dbReference type="GeneID" id="742848"/>
<dbReference type="KEGG" id="ptr:742848"/>
<dbReference type="CTD" id="4726"/>
<dbReference type="VGNC" id="VGNC:4097">
    <property type="gene designation" value="NDUFS6"/>
</dbReference>
<dbReference type="eggNOG" id="KOG3456">
    <property type="taxonomic scope" value="Eukaryota"/>
</dbReference>
<dbReference type="GeneTree" id="ENSGT00390000015775"/>
<dbReference type="InParanoid" id="Q0MQH7"/>
<dbReference type="OMA" id="TACCDGG"/>
<dbReference type="OrthoDB" id="15722at9604"/>
<dbReference type="Proteomes" id="UP000002277">
    <property type="component" value="Chromosome 5"/>
</dbReference>
<dbReference type="Bgee" id="ENSPTRG00000016706">
    <property type="expression patterns" value="Expressed in heart and 21 other cell types or tissues"/>
</dbReference>
<dbReference type="GO" id="GO:0005743">
    <property type="term" value="C:mitochondrial inner membrane"/>
    <property type="evidence" value="ECO:0007669"/>
    <property type="project" value="UniProtKB-SubCell"/>
</dbReference>
<dbReference type="GO" id="GO:0045271">
    <property type="term" value="C:respiratory chain complex I"/>
    <property type="evidence" value="ECO:0000250"/>
    <property type="project" value="UniProtKB"/>
</dbReference>
<dbReference type="GO" id="GO:0006120">
    <property type="term" value="P:mitochondrial electron transport, NADH to ubiquinone"/>
    <property type="evidence" value="ECO:0000318"/>
    <property type="project" value="GO_Central"/>
</dbReference>
<dbReference type="FunFam" id="2.60.260.40:FF:000002">
    <property type="entry name" value="NADH dehydrogenase [ubiquinone] iron-sulfur protein 6, mitochondrial"/>
    <property type="match status" value="1"/>
</dbReference>
<dbReference type="Gene3D" id="2.60.260.40">
    <property type="entry name" value="q5lls5 like domains"/>
    <property type="match status" value="1"/>
</dbReference>
<dbReference type="InterPro" id="IPR016668">
    <property type="entry name" value="NDUFS6"/>
</dbReference>
<dbReference type="InterPro" id="IPR019401">
    <property type="entry name" value="Znf_CHCC"/>
</dbReference>
<dbReference type="PANTHER" id="PTHR13156:SF0">
    <property type="entry name" value="NADH DEHYDROGENASE [UBIQUINONE] IRON-SULFUR PROTEIN 6, MITOCHONDRIAL"/>
    <property type="match status" value="1"/>
</dbReference>
<dbReference type="PANTHER" id="PTHR13156">
    <property type="entry name" value="NADH-UBIQUINONE OXIDOREDUCTASE 13 KD-A SUBUNIT"/>
    <property type="match status" value="1"/>
</dbReference>
<dbReference type="Pfam" id="PF10276">
    <property type="entry name" value="zf-CHCC"/>
    <property type="match status" value="1"/>
</dbReference>
<dbReference type="PIRSF" id="PIRSF016564">
    <property type="entry name" value="CI-13KD-A"/>
    <property type="match status" value="1"/>
</dbReference>
<keyword id="KW-0007">Acetylation</keyword>
<keyword id="KW-0249">Electron transport</keyword>
<keyword id="KW-0472">Membrane</keyword>
<keyword id="KW-0496">Mitochondrion</keyword>
<keyword id="KW-0999">Mitochondrion inner membrane</keyword>
<keyword id="KW-1185">Reference proteome</keyword>
<keyword id="KW-0679">Respiratory chain</keyword>
<keyword id="KW-0809">Transit peptide</keyword>
<keyword id="KW-0813">Transport</keyword>
<organism>
    <name type="scientific">Pan troglodytes</name>
    <name type="common">Chimpanzee</name>
    <dbReference type="NCBI Taxonomy" id="9598"/>
    <lineage>
        <taxon>Eukaryota</taxon>
        <taxon>Metazoa</taxon>
        <taxon>Chordata</taxon>
        <taxon>Craniata</taxon>
        <taxon>Vertebrata</taxon>
        <taxon>Euteleostomi</taxon>
        <taxon>Mammalia</taxon>
        <taxon>Eutheria</taxon>
        <taxon>Euarchontoglires</taxon>
        <taxon>Primates</taxon>
        <taxon>Haplorrhini</taxon>
        <taxon>Catarrhini</taxon>
        <taxon>Hominidae</taxon>
        <taxon>Pan</taxon>
    </lineage>
</organism>
<evidence type="ECO:0000250" key="1"/>
<evidence type="ECO:0000250" key="2">
    <source>
        <dbReference type="UniProtKB" id="O75380"/>
    </source>
</evidence>
<evidence type="ECO:0000250" key="3">
    <source>
        <dbReference type="UniProtKB" id="P52503"/>
    </source>
</evidence>
<evidence type="ECO:0000305" key="4"/>
<protein>
    <recommendedName>
        <fullName>NADH dehydrogenase [ubiquinone] iron-sulfur protein 6, mitochondrial</fullName>
    </recommendedName>
    <alternativeName>
        <fullName>Complex I-13kD-A</fullName>
        <shortName>CI-13kD-A</shortName>
    </alternativeName>
    <alternativeName>
        <fullName>NADH-ubiquinone oxidoreductase 13 kDa-A subunit</fullName>
    </alternativeName>
</protein>
<accession>Q0MQH7</accession>
<gene>
    <name type="primary">NDUFS6</name>
</gene>
<reference key="1">
    <citation type="journal article" date="2006" name="Gene">
        <title>Adaptive selection of mitochondrial complex I subunits during primate radiation.</title>
        <authorList>
            <person name="Mishmar D."/>
            <person name="Ruiz-Pesini E."/>
            <person name="Mondragon-Palomino M."/>
            <person name="Procaccio V."/>
            <person name="Gaut B."/>
            <person name="Wallace D.C."/>
        </authorList>
    </citation>
    <scope>NUCLEOTIDE SEQUENCE [MRNA]</scope>
</reference>
<feature type="transit peptide" description="Mitochondrion" evidence="1">
    <location>
        <begin position="1"/>
        <end position="28"/>
    </location>
</feature>
<feature type="chain" id="PRO_0000251869" description="NADH dehydrogenase [ubiquinone] iron-sulfur protein 6, mitochondrial">
    <location>
        <begin position="29"/>
        <end position="124"/>
    </location>
</feature>
<feature type="modified residue" description="N6-acetyllysine" evidence="3">
    <location>
        <position position="98"/>
    </location>
</feature>
<sequence length="124" mass="13712">MAAAMTFCRLLNRCGEAARSLPLGARCFGVRVSPTGEKVTHTGQVYDDKDYRRIRFVGRQKEVNENFAIDLIAEQPVSEVETRVIACDGGGGALGHPKVYINLDKETKTGTCGYCGLQFRQHHH</sequence>
<comment type="function">
    <text evidence="2">Accessory subunit of the mitochondrial membrane respiratory chain NADH dehydrogenase (Complex I), that is believed not to be involved in catalysis. Complex I functions in the transfer of electrons from NADH to the respiratory chain. The immediate electron acceptor for the enzyme is believed to be ubiquinone.</text>
</comment>
<comment type="subunit">
    <text evidence="2">Mammalian complex I is composed of 45 different subunits. This is a component of the iron-sulfur (IP) fragment of the enzyme.</text>
</comment>
<comment type="subcellular location">
    <subcellularLocation>
        <location evidence="2">Mitochondrion inner membrane</location>
        <topology evidence="2">Peripheral membrane protein</topology>
        <orientation evidence="2">Matrix side</orientation>
    </subcellularLocation>
</comment>
<comment type="similarity">
    <text evidence="4">Belongs to the complex I NDUFS6 subunit family.</text>
</comment>
<name>NDUS6_PANTR</name>
<proteinExistence type="evidence at transcript level"/>